<organism>
    <name type="scientific">Escherichia coli (strain K12)</name>
    <dbReference type="NCBI Taxonomy" id="83333"/>
    <lineage>
        <taxon>Bacteria</taxon>
        <taxon>Pseudomonadati</taxon>
        <taxon>Pseudomonadota</taxon>
        <taxon>Gammaproteobacteria</taxon>
        <taxon>Enterobacterales</taxon>
        <taxon>Enterobacteriaceae</taxon>
        <taxon>Escherichia</taxon>
    </lineage>
</organism>
<reference key="1">
    <citation type="journal article" date="1991" name="J. Bacteriol.">
        <title>Cloning, mapping, and characterization of the Escherichia coli prc gene, which is involved in C-terminal processing of penicillin-binding protein 3.</title>
        <authorList>
            <person name="Hara H."/>
            <person name="Yamamoto Y."/>
            <person name="Higashitani A."/>
            <person name="Suzuki H."/>
            <person name="Nishimura Y."/>
        </authorList>
    </citation>
    <scope>NUCLEOTIDE SEQUENCE [GENOMIC DNA]</scope>
    <source>
        <strain>K12 / W3110 / ATCC 27325 / DSM 5911</strain>
    </source>
</reference>
<reference key="2">
    <citation type="journal article" date="1992" name="Proc. Natl. Acad. Sci. U.S.A.">
        <title>Tsp: a tail-specific protease that selectively degrades proteins with nonpolar C termini.</title>
        <authorList>
            <person name="Silber K.R."/>
            <person name="Keiler K.C."/>
            <person name="Sauer R.T."/>
        </authorList>
    </citation>
    <scope>NUCLEOTIDE SEQUENCE [GENOMIC DNA]</scope>
</reference>
<reference key="3">
    <citation type="journal article" date="1996" name="DNA Res.">
        <title>A 460-kb DNA sequence of the Escherichia coli K-12 genome corresponding to the 40.1-50.0 min region on the linkage map.</title>
        <authorList>
            <person name="Itoh T."/>
            <person name="Aiba H."/>
            <person name="Baba T."/>
            <person name="Fujita K."/>
            <person name="Hayashi K."/>
            <person name="Inada T."/>
            <person name="Isono K."/>
            <person name="Kasai H."/>
            <person name="Kimura S."/>
            <person name="Kitakawa M."/>
            <person name="Kitagawa M."/>
            <person name="Makino K."/>
            <person name="Miki T."/>
            <person name="Mizobuchi K."/>
            <person name="Mori H."/>
            <person name="Mori T."/>
            <person name="Motomura K."/>
            <person name="Nakade S."/>
            <person name="Nakamura Y."/>
            <person name="Nashimoto H."/>
            <person name="Nishio Y."/>
            <person name="Oshima T."/>
            <person name="Saito N."/>
            <person name="Sampei G."/>
            <person name="Seki Y."/>
            <person name="Sivasundaram S."/>
            <person name="Tagami H."/>
            <person name="Takeda J."/>
            <person name="Takemoto K."/>
            <person name="Wada C."/>
            <person name="Yamamoto Y."/>
            <person name="Horiuchi T."/>
        </authorList>
    </citation>
    <scope>NUCLEOTIDE SEQUENCE [LARGE SCALE GENOMIC DNA]</scope>
    <source>
        <strain>K12 / W3110 / ATCC 27325 / DSM 5911</strain>
    </source>
</reference>
<reference key="4">
    <citation type="journal article" date="1997" name="Science">
        <title>The complete genome sequence of Escherichia coli K-12.</title>
        <authorList>
            <person name="Blattner F.R."/>
            <person name="Plunkett G. III"/>
            <person name="Bloch C.A."/>
            <person name="Perna N.T."/>
            <person name="Burland V."/>
            <person name="Riley M."/>
            <person name="Collado-Vides J."/>
            <person name="Glasner J.D."/>
            <person name="Rode C.K."/>
            <person name="Mayhew G.F."/>
            <person name="Gregor J."/>
            <person name="Davis N.W."/>
            <person name="Kirkpatrick H.A."/>
            <person name="Goeden M.A."/>
            <person name="Rose D.J."/>
            <person name="Mau B."/>
            <person name="Shao Y."/>
        </authorList>
    </citation>
    <scope>NUCLEOTIDE SEQUENCE [LARGE SCALE GENOMIC DNA]</scope>
    <source>
        <strain>K12 / MG1655 / ATCC 47076</strain>
    </source>
</reference>
<reference key="5">
    <citation type="journal article" date="2006" name="Mol. Syst. Biol.">
        <title>Highly accurate genome sequences of Escherichia coli K-12 strains MG1655 and W3110.</title>
        <authorList>
            <person name="Hayashi K."/>
            <person name="Morooka N."/>
            <person name="Yamamoto Y."/>
            <person name="Fujita K."/>
            <person name="Isono K."/>
            <person name="Choi S."/>
            <person name="Ohtsubo E."/>
            <person name="Baba T."/>
            <person name="Wanner B.L."/>
            <person name="Mori H."/>
            <person name="Horiuchi T."/>
        </authorList>
    </citation>
    <scope>NUCLEOTIDE SEQUENCE [LARGE SCALE GENOMIC DNA]</scope>
    <source>
        <strain>K12 / W3110 / ATCC 27325 / DSM 5911</strain>
    </source>
</reference>
<reference key="6">
    <citation type="journal article" date="1992" name="J. Bacteriol.">
        <title>Multiple antibiotic susceptibility associated with inactivation of the prc gene.</title>
        <authorList>
            <person name="Seoane A."/>
            <person name="Sabbaj A."/>
            <person name="McMurry L.M."/>
            <person name="Levy S.B."/>
        </authorList>
    </citation>
    <scope>NUCLEOTIDE SEQUENCE [GENOMIC DNA] OF 330-403</scope>
</reference>
<reference key="7">
    <citation type="journal article" date="1999" name="J. Bacteriol.">
        <title>Protein ProQ influences osmotic activation of compatible solute transporter ProP in Escherichia coli K-12.</title>
        <authorList>
            <person name="Kunte H.J."/>
            <person name="Crane R.A."/>
            <person name="Culham D.E."/>
            <person name="Richmond D."/>
            <person name="Wood J.M."/>
        </authorList>
    </citation>
    <scope>NUCLEOTIDE SEQUENCE [GENOMIC DNA] OF 1-33</scope>
    <source>
        <strain>K12</strain>
    </source>
</reference>
<reference key="8">
    <citation type="journal article" date="1995" name="J. Biol. Chem.">
        <title>Identification of active site residues of the Tsp protease.</title>
        <authorList>
            <person name="Keiler K.C."/>
            <person name="Sauer R.T."/>
        </authorList>
    </citation>
    <scope>MUTAGENESIS OF GLY-397; GLY-398; SER-452; GLU-455; ASP-463; THR-474 AND LYS-477</scope>
    <scope>IDENTIFICATION OF ACTIVE SITE RESIDUES</scope>
</reference>
<reference key="9">
    <citation type="journal article" date="1996" name="J. Biol. Chem.">
        <title>Sequence determinants of C-terminal substrate recognition by the Tsp protease.</title>
        <authorList>
            <person name="Keiler K.C."/>
            <person name="Sauer R.T."/>
        </authorList>
    </citation>
    <scope>SUBSTRATE SPECIFICITY</scope>
</reference>
<protein>
    <recommendedName>
        <fullName>Tail-specific protease</fullName>
        <ecNumber>3.4.21.102</ecNumber>
    </recommendedName>
    <alternativeName>
        <fullName>C-terminal-processing peptidase</fullName>
    </alternativeName>
    <alternativeName>
        <fullName>PRC protein</fullName>
    </alternativeName>
    <alternativeName>
        <fullName>Protease Re</fullName>
    </alternativeName>
</protein>
<gene>
    <name type="primary">prc</name>
    <name type="synonym">tsp</name>
    <name type="ordered locus">b1830</name>
    <name type="ordered locus">JW1819</name>
</gene>
<name>PRC_ECOLI</name>
<dbReference type="EC" id="3.4.21.102"/>
<dbReference type="EMBL" id="D00674">
    <property type="protein sequence ID" value="BAA00577.1"/>
    <property type="molecule type" value="Genomic_DNA"/>
</dbReference>
<dbReference type="EMBL" id="D00674">
    <property type="protein sequence ID" value="BAA00578.1"/>
    <property type="status" value="ALT_INIT"/>
    <property type="molecule type" value="Genomic_DNA"/>
</dbReference>
<dbReference type="EMBL" id="M75634">
    <property type="protein sequence ID" value="AAA24699.1"/>
    <property type="molecule type" value="Genomic_DNA"/>
</dbReference>
<dbReference type="EMBL" id="U00096">
    <property type="protein sequence ID" value="AAC74900.1"/>
    <property type="molecule type" value="Genomic_DNA"/>
</dbReference>
<dbReference type="EMBL" id="AP009048">
    <property type="protein sequence ID" value="BAA15638.1"/>
    <property type="molecule type" value="Genomic_DNA"/>
</dbReference>
<dbReference type="EMBL" id="S49803">
    <property type="protein sequence ID" value="AAB24313.1"/>
    <property type="molecule type" value="Genomic_DNA"/>
</dbReference>
<dbReference type="EMBL" id="L48409">
    <property type="protein sequence ID" value="AAD41528.1"/>
    <property type="molecule type" value="Genomic_DNA"/>
</dbReference>
<dbReference type="PIR" id="A41798">
    <property type="entry name" value="A41798"/>
</dbReference>
<dbReference type="RefSeq" id="NP_416344.1">
    <property type="nucleotide sequence ID" value="NC_000913.3"/>
</dbReference>
<dbReference type="RefSeq" id="WP_001055791.1">
    <property type="nucleotide sequence ID" value="NZ_SSZK01000001.1"/>
</dbReference>
<dbReference type="PDB" id="5WQL">
    <property type="method" value="X-ray"/>
    <property type="resolution" value="2.30 A"/>
    <property type="chains" value="C/D=1-682"/>
</dbReference>
<dbReference type="PDB" id="6IQQ">
    <property type="method" value="X-ray"/>
    <property type="resolution" value="2.80 A"/>
    <property type="chains" value="C/D=1-682"/>
</dbReference>
<dbReference type="PDB" id="6IQR">
    <property type="method" value="X-ray"/>
    <property type="resolution" value="3.42 A"/>
    <property type="chains" value="A/B=1-682"/>
</dbReference>
<dbReference type="PDB" id="6IQS">
    <property type="method" value="X-ray"/>
    <property type="resolution" value="2.69 A"/>
    <property type="chains" value="C/D=1-682"/>
</dbReference>
<dbReference type="PDB" id="6IQU">
    <property type="method" value="X-ray"/>
    <property type="resolution" value="2.90 A"/>
    <property type="chains" value="B=1-246, B=340-682"/>
</dbReference>
<dbReference type="PDB" id="8XUD">
    <property type="method" value="X-ray"/>
    <property type="resolution" value="3.49 A"/>
    <property type="chains" value="C/D=1-682"/>
</dbReference>
<dbReference type="PDBsum" id="5WQL"/>
<dbReference type="PDBsum" id="6IQQ"/>
<dbReference type="PDBsum" id="6IQR"/>
<dbReference type="PDBsum" id="6IQS"/>
<dbReference type="PDBsum" id="6IQU"/>
<dbReference type="PDBsum" id="8XUD"/>
<dbReference type="SMR" id="P23865"/>
<dbReference type="BioGRID" id="4263463">
    <property type="interactions" value="512"/>
</dbReference>
<dbReference type="DIP" id="DIP-10557N"/>
<dbReference type="FunCoup" id="P23865">
    <property type="interactions" value="361"/>
</dbReference>
<dbReference type="IntAct" id="P23865">
    <property type="interactions" value="3"/>
</dbReference>
<dbReference type="STRING" id="511145.b1830"/>
<dbReference type="MEROPS" id="S41.001"/>
<dbReference type="TCDB" id="9.B.174.1.2">
    <property type="family name" value="the two tunnel gated c-terminal processing protease (ctp) family"/>
</dbReference>
<dbReference type="jPOST" id="P23865"/>
<dbReference type="PaxDb" id="511145-b1830"/>
<dbReference type="EnsemblBacteria" id="AAC74900">
    <property type="protein sequence ID" value="AAC74900"/>
    <property type="gene ID" value="b1830"/>
</dbReference>
<dbReference type="GeneID" id="946096"/>
<dbReference type="KEGG" id="ecj:JW1819"/>
<dbReference type="KEGG" id="eco:b1830"/>
<dbReference type="KEGG" id="ecoc:C3026_10430"/>
<dbReference type="PATRIC" id="fig|511145.12.peg.1908"/>
<dbReference type="EchoBASE" id="EB0753"/>
<dbReference type="eggNOG" id="COG0793">
    <property type="taxonomic scope" value="Bacteria"/>
</dbReference>
<dbReference type="HOGENOM" id="CLU_016199_1_0_6"/>
<dbReference type="InParanoid" id="P23865"/>
<dbReference type="OMA" id="LPEAMPW"/>
<dbReference type="OrthoDB" id="9812068at2"/>
<dbReference type="PhylomeDB" id="P23865"/>
<dbReference type="BioCyc" id="EcoCyc:EG10760-MONOMER"/>
<dbReference type="BioCyc" id="MetaCyc:EG10760-MONOMER"/>
<dbReference type="BRENDA" id="3.4.21.102">
    <property type="organism ID" value="2026"/>
</dbReference>
<dbReference type="PHI-base" id="PHI:9896"/>
<dbReference type="PRO" id="PR:P23865"/>
<dbReference type="Proteomes" id="UP000000625">
    <property type="component" value="Chromosome"/>
</dbReference>
<dbReference type="GO" id="GO:0030288">
    <property type="term" value="C:outer membrane-bounded periplasmic space"/>
    <property type="evidence" value="ECO:0000314"/>
    <property type="project" value="EcoCyc"/>
</dbReference>
<dbReference type="GO" id="GO:0005886">
    <property type="term" value="C:plasma membrane"/>
    <property type="evidence" value="ECO:0007669"/>
    <property type="project" value="UniProtKB-SubCell"/>
</dbReference>
<dbReference type="GO" id="GO:0004175">
    <property type="term" value="F:endopeptidase activity"/>
    <property type="evidence" value="ECO:0000314"/>
    <property type="project" value="EcoliWiki"/>
</dbReference>
<dbReference type="GO" id="GO:0004252">
    <property type="term" value="F:serine-type endopeptidase activity"/>
    <property type="evidence" value="ECO:0007669"/>
    <property type="project" value="UniProtKB-EC"/>
</dbReference>
<dbReference type="GO" id="GO:0030163">
    <property type="term" value="P:protein catabolic process"/>
    <property type="evidence" value="ECO:0000314"/>
    <property type="project" value="EcoliWiki"/>
</dbReference>
<dbReference type="GO" id="GO:0006508">
    <property type="term" value="P:proteolysis"/>
    <property type="evidence" value="ECO:0000314"/>
    <property type="project" value="EcoliWiki"/>
</dbReference>
<dbReference type="GO" id="GO:0046677">
    <property type="term" value="P:response to antibiotic"/>
    <property type="evidence" value="ECO:0000315"/>
    <property type="project" value="EcoCyc"/>
</dbReference>
<dbReference type="GO" id="GO:0007165">
    <property type="term" value="P:signal transduction"/>
    <property type="evidence" value="ECO:0000318"/>
    <property type="project" value="GO_Central"/>
</dbReference>
<dbReference type="GO" id="GO:0141178">
    <property type="term" value="P:symbiont-mediated evasion of recognition by host complement"/>
    <property type="evidence" value="ECO:0000269"/>
    <property type="project" value="SigSci"/>
</dbReference>
<dbReference type="CDD" id="cd06782">
    <property type="entry name" value="cpPDZ_CPP-like"/>
    <property type="match status" value="1"/>
</dbReference>
<dbReference type="CDD" id="cd07560">
    <property type="entry name" value="Peptidase_S41_CPP"/>
    <property type="match status" value="1"/>
</dbReference>
<dbReference type="FunFam" id="3.90.226.10:FF:000015">
    <property type="entry name" value="Periplasmic tail-specific protease"/>
    <property type="match status" value="1"/>
</dbReference>
<dbReference type="FunFam" id="2.30.42.10:FF:000083">
    <property type="entry name" value="Tail-specific protease"/>
    <property type="match status" value="1"/>
</dbReference>
<dbReference type="Gene3D" id="2.30.42.10">
    <property type="match status" value="1"/>
</dbReference>
<dbReference type="Gene3D" id="3.30.750.44">
    <property type="match status" value="1"/>
</dbReference>
<dbReference type="Gene3D" id="3.90.226.10">
    <property type="entry name" value="2-enoyl-CoA Hydratase, Chain A, domain 1"/>
    <property type="match status" value="1"/>
</dbReference>
<dbReference type="InterPro" id="IPR029045">
    <property type="entry name" value="ClpP/crotonase-like_dom_sf"/>
</dbReference>
<dbReference type="InterPro" id="IPR001478">
    <property type="entry name" value="PDZ"/>
</dbReference>
<dbReference type="InterPro" id="IPR036034">
    <property type="entry name" value="PDZ_sf"/>
</dbReference>
<dbReference type="InterPro" id="IPR004447">
    <property type="entry name" value="Peptidase_S41A"/>
</dbReference>
<dbReference type="InterPro" id="IPR005151">
    <property type="entry name" value="Tail-specific_protease"/>
</dbReference>
<dbReference type="InterPro" id="IPR020992">
    <property type="entry name" value="Tail_Prtase_C"/>
</dbReference>
<dbReference type="InterPro" id="IPR040573">
    <property type="entry name" value="TSP_N"/>
</dbReference>
<dbReference type="NCBIfam" id="TIGR00225">
    <property type="entry name" value="prc"/>
    <property type="match status" value="1"/>
</dbReference>
<dbReference type="NCBIfam" id="NF008388">
    <property type="entry name" value="PRK11186.1"/>
    <property type="match status" value="1"/>
</dbReference>
<dbReference type="PANTHER" id="PTHR32060:SF22">
    <property type="entry name" value="CARBOXYL-TERMINAL-PROCESSING PEPTIDASE 3, CHLOROPLASTIC"/>
    <property type="match status" value="1"/>
</dbReference>
<dbReference type="PANTHER" id="PTHR32060">
    <property type="entry name" value="TAIL-SPECIFIC PROTEASE"/>
    <property type="match status" value="1"/>
</dbReference>
<dbReference type="Pfam" id="PF11818">
    <property type="entry name" value="DUF3340"/>
    <property type="match status" value="1"/>
</dbReference>
<dbReference type="Pfam" id="PF00595">
    <property type="entry name" value="PDZ"/>
    <property type="match status" value="1"/>
</dbReference>
<dbReference type="Pfam" id="PF03572">
    <property type="entry name" value="Peptidase_S41"/>
    <property type="match status" value="1"/>
</dbReference>
<dbReference type="Pfam" id="PF17804">
    <property type="entry name" value="TSP_NTD"/>
    <property type="match status" value="1"/>
</dbReference>
<dbReference type="SMART" id="SM00228">
    <property type="entry name" value="PDZ"/>
    <property type="match status" value="1"/>
</dbReference>
<dbReference type="SMART" id="SM00245">
    <property type="entry name" value="TSPc"/>
    <property type="match status" value="1"/>
</dbReference>
<dbReference type="SUPFAM" id="SSF52096">
    <property type="entry name" value="ClpP/crotonase"/>
    <property type="match status" value="1"/>
</dbReference>
<dbReference type="SUPFAM" id="SSF50156">
    <property type="entry name" value="PDZ domain-like"/>
    <property type="match status" value="1"/>
</dbReference>
<dbReference type="PROSITE" id="PS50106">
    <property type="entry name" value="PDZ"/>
    <property type="match status" value="1"/>
</dbReference>
<proteinExistence type="evidence at protein level"/>
<keyword id="KW-0002">3D-structure</keyword>
<keyword id="KW-0997">Cell inner membrane</keyword>
<keyword id="KW-1003">Cell membrane</keyword>
<keyword id="KW-0378">Hydrolase</keyword>
<keyword id="KW-0472">Membrane</keyword>
<keyword id="KW-0645">Protease</keyword>
<keyword id="KW-1185">Reference proteome</keyword>
<keyword id="KW-0720">Serine protease</keyword>
<keyword id="KW-0732">Signal</keyword>
<comment type="function">
    <text>Involved in the cleavage of a C-terminal peptide of 11 residues from the precursor form of penicillin-binding protein 3 (PBP3). May be involved in protection of the bacterium from thermal and osmotic stresses.</text>
</comment>
<comment type="catalytic activity">
    <reaction>
        <text>The enzyme shows specific recognition of a C-terminal tripeptide, Xaa-Yaa-Zaa, in which Xaa is preferably Ala or Leu, Yaa is preferably Ala or Tyr, and Zaa is preferably Ala, but then cleaves at a variable distance from the C-terminus. A typical cleavage is -Ala-Ala-|-Arg-Ala-Ala-Lys-Glu-Asn-Tyr-Ala-Leu-Ala-Ala.</text>
        <dbReference type="EC" id="3.4.21.102"/>
    </reaction>
</comment>
<comment type="subcellular location">
    <subcellularLocation>
        <location>Cell inner membrane</location>
        <topology>Peripheral membrane protein</topology>
        <orientation>Periplasmic side</orientation>
    </subcellularLocation>
</comment>
<comment type="similarity">
    <text evidence="5">Belongs to the peptidase S41A family.</text>
</comment>
<comment type="sequence caution" evidence="5">
    <conflict type="erroneous initiation">
        <sequence resource="EMBL-CDS" id="BAA00578"/>
    </conflict>
</comment>
<sequence>MNMFFRLTALAGLLAIAGQTFAVEDITRADQIPVLKEETQHATVSERVTSRFTRSHYRQFDLDQAFSAKIFDRYLNLLDYSHNVLLASDVEQFAKKKTELGDELRSGKLDVFYDLYNLAQKRRFERYQYALSVLEKPMDFTGNDTYNLDRSKAPWPKNEAELNALWDSKVKFDELSLKLTGKTDKEIRETLTRRYKFAIRRLAQTNSEDVFSLAMTAFAREIDPHTNYLSPRNTEQFNTEMSLSLEGIGAVLQMDDDYTVINSMVAGGPAAKSKAISVGDKIVGVGQTGKPMVDVIGWRLDDVVALIKGPKGSKVRLEILPAGKGTKTRTVTLTRERIRLEDRAVKMSVKTVGKEKVGVLDIPGFYVGLTDDVKVQLQKLEKQNVSSVIIDLRSNGGGALTEAVSLSGLFIPAGPIVQVRDNNGKVREDSDTDGQVFYKGPLVVLVDRFSASASEIFAAAMQDYGRALVVGEPTFGKGTVQQYRSLNRIYDQMLRPEWPALGSVQYTIQKFYRVNGGSTQRKGVTPDIIMPTGNEETETGEKFEDNALPWDSIDAATYVKSGDLTAFEPELLKEHNARIAKDPEFQNIMKDIARFNAMKDKRNIVSLNYAVREKENNEDDATRLARLNERFKREGKPELKKLDDLPKDYQEPDPYLDETVNIALDLAKLEKARPAEQPAPVK</sequence>
<feature type="signal peptide" evidence="1">
    <location>
        <begin position="1"/>
        <end position="22"/>
    </location>
</feature>
<feature type="chain" id="PRO_0000027331" description="Tail-specific protease">
    <location>
        <begin position="23"/>
        <end position="682"/>
    </location>
</feature>
<feature type="domain" description="PDZ" evidence="2">
    <location>
        <begin position="238"/>
        <end position="322"/>
    </location>
</feature>
<feature type="region of interest" description="Disordered" evidence="3">
    <location>
        <begin position="635"/>
        <end position="654"/>
    </location>
</feature>
<feature type="compositionally biased region" description="Basic and acidic residues" evidence="3">
    <location>
        <begin position="635"/>
        <end position="650"/>
    </location>
</feature>
<feature type="active site" description="Charge relay system">
    <location>
        <position position="452"/>
    </location>
</feature>
<feature type="active site" description="Charge relay system" evidence="5">
    <location>
        <position position="463"/>
    </location>
</feature>
<feature type="active site" description="Charge relay system">
    <location>
        <position position="477"/>
    </location>
</feature>
<feature type="mutagenesis site" description="Loss of activity. Perturbs protein structure." evidence="4">
    <original>G</original>
    <variation>A</variation>
    <location>
        <position position="397"/>
    </location>
</feature>
<feature type="mutagenesis site" description="Loss of activity. Perturbs protein structure." evidence="4">
    <original>G</original>
    <variation>A</variation>
    <location>
        <position position="398"/>
    </location>
</feature>
<feature type="mutagenesis site" description="Loss of activity." evidence="4">
    <original>S</original>
    <variation>A</variation>
    <location>
        <position position="452"/>
    </location>
</feature>
<feature type="mutagenesis site" description="Reduces activity by over 90%." evidence="4">
    <original>S</original>
    <variation>C</variation>
    <location>
        <position position="452"/>
    </location>
</feature>
<feature type="mutagenesis site" description="Loss of activity. Perturbs protein structure." evidence="4">
    <original>E</original>
    <variation>A</variation>
    <location>
        <position position="455"/>
    </location>
</feature>
<feature type="mutagenesis site" description="Loss of activity." evidence="4">
    <original>D</original>
    <variation>A</variation>
    <location>
        <position position="463"/>
    </location>
</feature>
<feature type="mutagenesis site" description="Reduces activity by 90%." evidence="4">
    <original>D</original>
    <variation>N</variation>
    <location>
        <position position="463"/>
    </location>
</feature>
<feature type="mutagenesis site" description="Loss of activity. Perturbs protein structure." evidence="4">
    <original>T</original>
    <variation>A</variation>
    <location>
        <position position="474"/>
    </location>
</feature>
<feature type="mutagenesis site" description="Loss of activity. No apparent effect on protein structure." evidence="4">
    <original>K</original>
    <variation>A</variation>
    <variation>H</variation>
    <location>
        <position position="477"/>
    </location>
</feature>
<feature type="mutagenesis site" description="Loss of activity. Perturbs protein structure." evidence="4">
    <original>K</original>
    <variation>R</variation>
    <location>
        <position position="477"/>
    </location>
</feature>
<feature type="sequence conflict" description="In Ref. 1; BAA00577/BAA00578." evidence="5" ref="1">
    <original>L</original>
    <variation>Q</variation>
    <location>
        <position position="317"/>
    </location>
</feature>
<feature type="helix" evidence="6">
    <location>
        <begin position="29"/>
        <end position="31"/>
    </location>
</feature>
<feature type="helix" evidence="6">
    <location>
        <begin position="41"/>
        <end position="54"/>
    </location>
</feature>
<feature type="strand" evidence="10">
    <location>
        <begin position="56"/>
        <end position="58"/>
    </location>
</feature>
<feature type="helix" evidence="6">
    <location>
        <begin position="64"/>
        <end position="78"/>
    </location>
</feature>
<feature type="turn" evidence="8">
    <location>
        <begin position="79"/>
        <end position="81"/>
    </location>
</feature>
<feature type="helix" evidence="6">
    <location>
        <begin position="87"/>
        <end position="94"/>
    </location>
</feature>
<feature type="helix" evidence="6">
    <location>
        <begin position="95"/>
        <end position="99"/>
    </location>
</feature>
<feature type="helix" evidence="6">
    <location>
        <begin position="100"/>
        <end position="106"/>
    </location>
</feature>
<feature type="helix" evidence="6">
    <location>
        <begin position="110"/>
        <end position="134"/>
    </location>
</feature>
<feature type="strand" evidence="6">
    <location>
        <begin position="145"/>
        <end position="148"/>
    </location>
</feature>
<feature type="strand" evidence="11">
    <location>
        <begin position="151"/>
        <end position="153"/>
    </location>
</feature>
<feature type="helix" evidence="6">
    <location>
        <begin position="159"/>
        <end position="178"/>
    </location>
</feature>
<feature type="turn" evidence="6">
    <location>
        <begin position="179"/>
        <end position="181"/>
    </location>
</feature>
<feature type="helix" evidence="6">
    <location>
        <begin position="184"/>
        <end position="203"/>
    </location>
</feature>
<feature type="helix" evidence="6">
    <location>
        <begin position="207"/>
        <end position="222"/>
    </location>
</feature>
<feature type="strand" evidence="6">
    <location>
        <begin position="227"/>
        <end position="229"/>
    </location>
</feature>
<feature type="helix" evidence="6">
    <location>
        <begin position="231"/>
        <end position="242"/>
    </location>
</feature>
<feature type="strand" evidence="6">
    <location>
        <begin position="243"/>
        <end position="247"/>
    </location>
</feature>
<feature type="strand" evidence="6">
    <location>
        <begin position="249"/>
        <end position="257"/>
    </location>
</feature>
<feature type="strand" evidence="6">
    <location>
        <begin position="259"/>
        <end position="264"/>
    </location>
</feature>
<feature type="strand" evidence="11">
    <location>
        <begin position="266"/>
        <end position="268"/>
    </location>
</feature>
<feature type="turn" evidence="6">
    <location>
        <begin position="269"/>
        <end position="272"/>
    </location>
</feature>
<feature type="turn" evidence="11">
    <location>
        <begin position="273"/>
        <end position="276"/>
    </location>
</feature>
<feature type="strand" evidence="6">
    <location>
        <begin position="281"/>
        <end position="290"/>
    </location>
</feature>
<feature type="helix" evidence="6">
    <location>
        <begin position="300"/>
        <end position="307"/>
    </location>
</feature>
<feature type="strand" evidence="6">
    <location>
        <begin position="314"/>
        <end position="320"/>
    </location>
</feature>
<feature type="strand" evidence="6">
    <location>
        <begin position="322"/>
        <end position="325"/>
    </location>
</feature>
<feature type="strand" evidence="6">
    <location>
        <begin position="329"/>
        <end position="334"/>
    </location>
</feature>
<feature type="strand" evidence="6">
    <location>
        <begin position="336"/>
        <end position="339"/>
    </location>
</feature>
<feature type="helix" evidence="6">
    <location>
        <begin position="341"/>
        <end position="343"/>
    </location>
</feature>
<feature type="strand" evidence="6">
    <location>
        <begin position="346"/>
        <end position="352"/>
    </location>
</feature>
<feature type="strand" evidence="6">
    <location>
        <begin position="355"/>
        <end position="361"/>
    </location>
</feature>
<feature type="helix" evidence="6">
    <location>
        <begin position="369"/>
        <end position="382"/>
    </location>
</feature>
<feature type="strand" evidence="6">
    <location>
        <begin position="386"/>
        <end position="391"/>
    </location>
</feature>
<feature type="strand" evidence="6">
    <location>
        <begin position="397"/>
        <end position="399"/>
    </location>
</feature>
<feature type="helix" evidence="6">
    <location>
        <begin position="400"/>
        <end position="408"/>
    </location>
</feature>
<feature type="strand" evidence="6">
    <location>
        <begin position="413"/>
        <end position="420"/>
    </location>
</feature>
<feature type="strand" evidence="6">
    <location>
        <begin position="426"/>
        <end position="430"/>
    </location>
</feature>
<feature type="strand" evidence="6">
    <location>
        <begin position="442"/>
        <end position="446"/>
    </location>
</feature>
<feature type="helix" evidence="6">
    <location>
        <begin position="453"/>
        <end position="463"/>
    </location>
</feature>
<feature type="strand" evidence="6">
    <location>
        <begin position="467"/>
        <end position="472"/>
    </location>
</feature>
<feature type="strand" evidence="6">
    <location>
        <begin position="479"/>
        <end position="485"/>
    </location>
</feature>
<feature type="helix" evidence="6">
    <location>
        <begin position="491"/>
        <end position="494"/>
    </location>
</feature>
<feature type="strand" evidence="6">
    <location>
        <begin position="503"/>
        <end position="512"/>
    </location>
</feature>
<feature type="strand" evidence="9">
    <location>
        <begin position="516"/>
        <end position="518"/>
    </location>
</feature>
<feature type="turn" evidence="6">
    <location>
        <begin position="520"/>
        <end position="522"/>
    </location>
</feature>
<feature type="strand" evidence="6">
    <location>
        <begin position="527"/>
        <end position="529"/>
    </location>
</feature>
<feature type="helix" evidence="6">
    <location>
        <begin position="531"/>
        <end position="534"/>
    </location>
</feature>
<feature type="strand" evidence="7">
    <location>
        <begin position="538"/>
        <end position="540"/>
    </location>
</feature>
<feature type="helix" evidence="6">
    <location>
        <begin position="541"/>
        <end position="543"/>
    </location>
</feature>
<feature type="helix" evidence="6">
    <location>
        <begin position="565"/>
        <end position="567"/>
    </location>
</feature>
<feature type="helix" evidence="6">
    <location>
        <begin position="568"/>
        <end position="580"/>
    </location>
</feature>
<feature type="helix" evidence="6">
    <location>
        <begin position="583"/>
        <end position="598"/>
    </location>
</feature>
<feature type="helix" evidence="6">
    <location>
        <begin position="599"/>
        <end position="601"/>
    </location>
</feature>
<feature type="strand" evidence="6">
    <location>
        <begin position="604"/>
        <end position="606"/>
    </location>
</feature>
<feature type="helix" evidence="6">
    <location>
        <begin position="609"/>
        <end position="633"/>
    </location>
</feature>
<feature type="helix" evidence="6">
    <location>
        <begin position="642"/>
        <end position="644"/>
    </location>
</feature>
<feature type="helix" evidence="6">
    <location>
        <begin position="654"/>
        <end position="670"/>
    </location>
</feature>
<evidence type="ECO:0000255" key="1"/>
<evidence type="ECO:0000255" key="2">
    <source>
        <dbReference type="PROSITE-ProRule" id="PRU00143"/>
    </source>
</evidence>
<evidence type="ECO:0000256" key="3">
    <source>
        <dbReference type="SAM" id="MobiDB-lite"/>
    </source>
</evidence>
<evidence type="ECO:0000269" key="4">
    <source>
    </source>
</evidence>
<evidence type="ECO:0000305" key="5"/>
<evidence type="ECO:0007829" key="6">
    <source>
        <dbReference type="PDB" id="5WQL"/>
    </source>
</evidence>
<evidence type="ECO:0007829" key="7">
    <source>
        <dbReference type="PDB" id="6IQQ"/>
    </source>
</evidence>
<evidence type="ECO:0007829" key="8">
    <source>
        <dbReference type="PDB" id="6IQR"/>
    </source>
</evidence>
<evidence type="ECO:0007829" key="9">
    <source>
        <dbReference type="PDB" id="6IQS"/>
    </source>
</evidence>
<evidence type="ECO:0007829" key="10">
    <source>
        <dbReference type="PDB" id="6IQU"/>
    </source>
</evidence>
<evidence type="ECO:0007829" key="11">
    <source>
        <dbReference type="PDB" id="8XUD"/>
    </source>
</evidence>
<accession>P23865</accession>